<dbReference type="EMBL" id="CP000942">
    <property type="protein sequence ID" value="ACA33091.1"/>
    <property type="molecule type" value="Genomic_DNA"/>
</dbReference>
<dbReference type="RefSeq" id="WP_004026179.1">
    <property type="nucleotide sequence ID" value="NC_010503.1"/>
</dbReference>
<dbReference type="SMR" id="B1AIP7"/>
<dbReference type="GeneID" id="93848733"/>
<dbReference type="KEGG" id="upa:UPA3_0266"/>
<dbReference type="HOGENOM" id="CLU_074407_2_2_14"/>
<dbReference type="Proteomes" id="UP000002162">
    <property type="component" value="Chromosome"/>
</dbReference>
<dbReference type="GO" id="GO:0022625">
    <property type="term" value="C:cytosolic large ribosomal subunit"/>
    <property type="evidence" value="ECO:0007669"/>
    <property type="project" value="TreeGrafter"/>
</dbReference>
<dbReference type="GO" id="GO:0003735">
    <property type="term" value="F:structural constituent of ribosome"/>
    <property type="evidence" value="ECO:0007669"/>
    <property type="project" value="InterPro"/>
</dbReference>
<dbReference type="GO" id="GO:0006412">
    <property type="term" value="P:translation"/>
    <property type="evidence" value="ECO:0007669"/>
    <property type="project" value="UniProtKB-UniRule"/>
</dbReference>
<dbReference type="Gene3D" id="3.90.1030.10">
    <property type="entry name" value="Ribosomal protein L17"/>
    <property type="match status" value="1"/>
</dbReference>
<dbReference type="HAMAP" id="MF_01368">
    <property type="entry name" value="Ribosomal_bL17"/>
    <property type="match status" value="1"/>
</dbReference>
<dbReference type="InterPro" id="IPR000456">
    <property type="entry name" value="Ribosomal_bL17"/>
</dbReference>
<dbReference type="InterPro" id="IPR047859">
    <property type="entry name" value="Ribosomal_bL17_CS"/>
</dbReference>
<dbReference type="InterPro" id="IPR036373">
    <property type="entry name" value="Ribosomal_bL17_sf"/>
</dbReference>
<dbReference type="NCBIfam" id="TIGR00059">
    <property type="entry name" value="L17"/>
    <property type="match status" value="1"/>
</dbReference>
<dbReference type="PANTHER" id="PTHR14413:SF16">
    <property type="entry name" value="LARGE RIBOSOMAL SUBUNIT PROTEIN BL17M"/>
    <property type="match status" value="1"/>
</dbReference>
<dbReference type="PANTHER" id="PTHR14413">
    <property type="entry name" value="RIBOSOMAL PROTEIN L17"/>
    <property type="match status" value="1"/>
</dbReference>
<dbReference type="Pfam" id="PF01196">
    <property type="entry name" value="Ribosomal_L17"/>
    <property type="match status" value="1"/>
</dbReference>
<dbReference type="SUPFAM" id="SSF64263">
    <property type="entry name" value="Prokaryotic ribosomal protein L17"/>
    <property type="match status" value="1"/>
</dbReference>
<dbReference type="PROSITE" id="PS01167">
    <property type="entry name" value="RIBOSOMAL_L17"/>
    <property type="match status" value="1"/>
</dbReference>
<proteinExistence type="inferred from homology"/>
<gene>
    <name evidence="1" type="primary">rplQ</name>
    <name type="ordered locus">UPA3_0266</name>
</gene>
<evidence type="ECO:0000255" key="1">
    <source>
        <dbReference type="HAMAP-Rule" id="MF_01368"/>
    </source>
</evidence>
<evidence type="ECO:0000305" key="2"/>
<name>RL17_UREP2</name>
<accession>B1AIP7</accession>
<sequence length="119" mass="13192">MSYINKPGKTRAWRKMVSRQQVSDVISHGSIVTTKTKAKESQRHVDHLITLAKKNTLASRRAAAAILLGTNQHSADDLLRKLFNELGPKYANRAGGYTRVIKLGNRPGDNTEEAVLQLV</sequence>
<keyword id="KW-0687">Ribonucleoprotein</keyword>
<keyword id="KW-0689">Ribosomal protein</keyword>
<organism>
    <name type="scientific">Ureaplasma parvum serovar 3 (strain ATCC 27815 / 27 / NCTC 11736)</name>
    <dbReference type="NCBI Taxonomy" id="505682"/>
    <lineage>
        <taxon>Bacteria</taxon>
        <taxon>Bacillati</taxon>
        <taxon>Mycoplasmatota</taxon>
        <taxon>Mycoplasmoidales</taxon>
        <taxon>Mycoplasmoidaceae</taxon>
        <taxon>Ureaplasma</taxon>
    </lineage>
</organism>
<protein>
    <recommendedName>
        <fullName evidence="1">Large ribosomal subunit protein bL17</fullName>
    </recommendedName>
    <alternativeName>
        <fullName evidence="2">50S ribosomal protein L17</fullName>
    </alternativeName>
</protein>
<comment type="subunit">
    <text evidence="1">Part of the 50S ribosomal subunit. Contacts protein L32.</text>
</comment>
<comment type="similarity">
    <text evidence="1">Belongs to the bacterial ribosomal protein bL17 family.</text>
</comment>
<reference key="1">
    <citation type="submission" date="2008-02" db="EMBL/GenBank/DDBJ databases">
        <title>Genome sequence of Ureaplasma parvum serovar 3.</title>
        <authorList>
            <person name="Methe B.A."/>
            <person name="Glass J."/>
            <person name="Waites K."/>
            <person name="Shrivastava S."/>
        </authorList>
    </citation>
    <scope>NUCLEOTIDE SEQUENCE [LARGE SCALE GENOMIC DNA]</scope>
    <source>
        <strain>ATCC 27815 / 27 / NCTC 11736</strain>
    </source>
</reference>
<feature type="chain" id="PRO_1000087201" description="Large ribosomal subunit protein bL17">
    <location>
        <begin position="1"/>
        <end position="119"/>
    </location>
</feature>